<feature type="chain" id="PRO_0000117453" description="NADH-ubiquinone oxidoreductase chain 1">
    <location>
        <begin position="1"/>
        <end position="318"/>
    </location>
</feature>
<feature type="transmembrane region" description="Helical" evidence="2">
    <location>
        <begin position="3"/>
        <end position="23"/>
    </location>
</feature>
<feature type="transmembrane region" description="Helical" evidence="2">
    <location>
        <begin position="69"/>
        <end position="89"/>
    </location>
</feature>
<feature type="transmembrane region" description="Helical" evidence="2">
    <location>
        <begin position="100"/>
        <end position="120"/>
    </location>
</feature>
<feature type="transmembrane region" description="Helical" evidence="2">
    <location>
        <begin position="136"/>
        <end position="156"/>
    </location>
</feature>
<feature type="transmembrane region" description="Helical" evidence="2">
    <location>
        <begin position="172"/>
        <end position="192"/>
    </location>
</feature>
<feature type="transmembrane region" description="Helical" evidence="2">
    <location>
        <begin position="223"/>
        <end position="243"/>
    </location>
</feature>
<feature type="transmembrane region" description="Helical" evidence="2">
    <location>
        <begin position="253"/>
        <end position="273"/>
    </location>
</feature>
<feature type="transmembrane region" description="Helical" evidence="2">
    <location>
        <begin position="294"/>
        <end position="314"/>
    </location>
</feature>
<proteinExistence type="inferred from homology"/>
<accession>O78706</accession>
<organism>
    <name type="scientific">Phascolarctos cinereus</name>
    <name type="common">Koala</name>
    <dbReference type="NCBI Taxonomy" id="38626"/>
    <lineage>
        <taxon>Eukaryota</taxon>
        <taxon>Metazoa</taxon>
        <taxon>Chordata</taxon>
        <taxon>Craniata</taxon>
        <taxon>Vertebrata</taxon>
        <taxon>Euteleostomi</taxon>
        <taxon>Mammalia</taxon>
        <taxon>Metatheria</taxon>
        <taxon>Diprotodontia</taxon>
        <taxon>Phascolarctidae</taxon>
        <taxon>Phascolarctos</taxon>
    </lineage>
</organism>
<name>NU1M_PHACI</name>
<reference key="1">
    <citation type="journal article" date="1998" name="J. Mol. Evol.">
        <title>Conflict among individual mitochondrial proteins in resolving the phylogeny of eutherian orders.</title>
        <authorList>
            <person name="Cao Y."/>
            <person name="Janke A."/>
            <person name="Waddell P.J."/>
            <person name="Westerman M."/>
            <person name="Takenaka O."/>
            <person name="Murata S."/>
            <person name="Okada N."/>
            <person name="Paeaebo S."/>
            <person name="Hasegawa M."/>
        </authorList>
    </citation>
    <scope>NUCLEOTIDE SEQUENCE [GENOMIC DNA]</scope>
    <source>
        <tissue>Liver</tissue>
    </source>
</reference>
<evidence type="ECO:0000250" key="1"/>
<evidence type="ECO:0000255" key="2"/>
<evidence type="ECO:0000305" key="3"/>
<gene>
    <name type="primary">MT-ND1</name>
    <name type="synonym">MTND1</name>
    <name type="synonym">NADH1</name>
    <name type="synonym">ND1</name>
</gene>
<keyword id="KW-0249">Electron transport</keyword>
<keyword id="KW-0472">Membrane</keyword>
<keyword id="KW-0496">Mitochondrion</keyword>
<keyword id="KW-0999">Mitochondrion inner membrane</keyword>
<keyword id="KW-0520">NAD</keyword>
<keyword id="KW-1185">Reference proteome</keyword>
<keyword id="KW-0679">Respiratory chain</keyword>
<keyword id="KW-1278">Translocase</keyword>
<keyword id="KW-0812">Transmembrane</keyword>
<keyword id="KW-1133">Transmembrane helix</keyword>
<keyword id="KW-0813">Transport</keyword>
<keyword id="KW-0830">Ubiquinone</keyword>
<geneLocation type="mitochondrion"/>
<protein>
    <recommendedName>
        <fullName>NADH-ubiquinone oxidoreductase chain 1</fullName>
        <ecNumber>7.1.1.2</ecNumber>
    </recommendedName>
    <alternativeName>
        <fullName>NADH dehydrogenase subunit 1</fullName>
    </alternativeName>
</protein>
<comment type="function">
    <text evidence="1">Core subunit of the mitochondrial membrane respiratory chain NADH dehydrogenase (Complex I) that is believed to belong to the minimal assembly required for catalysis. Complex I functions in the transfer of electrons from NADH to the respiratory chain. The immediate electron acceptor for the enzyme is believed to be ubiquinone (By similarity).</text>
</comment>
<comment type="catalytic activity">
    <reaction>
        <text>a ubiquinone + NADH + 5 H(+)(in) = a ubiquinol + NAD(+) + 4 H(+)(out)</text>
        <dbReference type="Rhea" id="RHEA:29091"/>
        <dbReference type="Rhea" id="RHEA-COMP:9565"/>
        <dbReference type="Rhea" id="RHEA-COMP:9566"/>
        <dbReference type="ChEBI" id="CHEBI:15378"/>
        <dbReference type="ChEBI" id="CHEBI:16389"/>
        <dbReference type="ChEBI" id="CHEBI:17976"/>
        <dbReference type="ChEBI" id="CHEBI:57540"/>
        <dbReference type="ChEBI" id="CHEBI:57945"/>
        <dbReference type="EC" id="7.1.1.2"/>
    </reaction>
</comment>
<comment type="subcellular location">
    <subcellularLocation>
        <location evidence="1">Mitochondrion inner membrane</location>
        <topology evidence="1">Multi-pass membrane protein</topology>
    </subcellularLocation>
</comment>
<comment type="similarity">
    <text evidence="3">Belongs to the complex I subunit 1 family.</text>
</comment>
<dbReference type="EC" id="7.1.1.2"/>
<dbReference type="EMBL" id="AB011223">
    <property type="protein sequence ID" value="BAA32115.1"/>
    <property type="molecule type" value="Genomic_DNA"/>
</dbReference>
<dbReference type="SMR" id="O78706"/>
<dbReference type="Proteomes" id="UP000515140">
    <property type="component" value="Mitochondrion MT"/>
</dbReference>
<dbReference type="GO" id="GO:0005743">
    <property type="term" value="C:mitochondrial inner membrane"/>
    <property type="evidence" value="ECO:0007669"/>
    <property type="project" value="UniProtKB-SubCell"/>
</dbReference>
<dbReference type="GO" id="GO:0008137">
    <property type="term" value="F:NADH dehydrogenase (ubiquinone) activity"/>
    <property type="evidence" value="ECO:0007669"/>
    <property type="project" value="UniProtKB-EC"/>
</dbReference>
<dbReference type="GO" id="GO:0009060">
    <property type="term" value="P:aerobic respiration"/>
    <property type="evidence" value="ECO:0007669"/>
    <property type="project" value="TreeGrafter"/>
</dbReference>
<dbReference type="HAMAP" id="MF_01350">
    <property type="entry name" value="NDH1_NuoH"/>
    <property type="match status" value="1"/>
</dbReference>
<dbReference type="InterPro" id="IPR001694">
    <property type="entry name" value="NADH_UbQ_OxRdtase_su1/FPO"/>
</dbReference>
<dbReference type="InterPro" id="IPR018086">
    <property type="entry name" value="NADH_UbQ_OxRdtase_su1_CS"/>
</dbReference>
<dbReference type="PANTHER" id="PTHR11432">
    <property type="entry name" value="NADH DEHYDROGENASE SUBUNIT 1"/>
    <property type="match status" value="1"/>
</dbReference>
<dbReference type="PANTHER" id="PTHR11432:SF3">
    <property type="entry name" value="NADH-UBIQUINONE OXIDOREDUCTASE CHAIN 1"/>
    <property type="match status" value="1"/>
</dbReference>
<dbReference type="Pfam" id="PF00146">
    <property type="entry name" value="NADHdh"/>
    <property type="match status" value="1"/>
</dbReference>
<dbReference type="PROSITE" id="PS00667">
    <property type="entry name" value="COMPLEX1_ND1_1"/>
    <property type="match status" value="1"/>
</dbReference>
<dbReference type="PROSITE" id="PS00668">
    <property type="entry name" value="COMPLEX1_ND1_2"/>
    <property type="match status" value="1"/>
</dbReference>
<sequence>MLTINILLYTSPILLAVAFLTLVERKVLGYMQLRKGPNIVGPYGLLQPVADAVKLFTKEPSRPATSSTLMFITAPIMALTLALTIWVPLPMPHALIDLNLGVLFILTLSGLSVYPILWSGWASNSKYALIGALRAVAQTISYEVTLAMILLSITLINGSYTLKNLAITQENMWLLVSTWPLAMMWFISTLAETNRTPFDLTEGESELVSGFNVEYSAGPFAMFFLAEYTNILAMNAMTTILFLGSPINHNFTHINTLSFTLKTLMLTFLFLWIRASCPRFRYDQLMHLLWKNFLPLTLAFCLWYISIPIALSCIPPQI</sequence>